<feature type="chain" id="PRO_0000058170" description="Parkin coregulated gene protein homolog">
    <location>
        <begin position="1"/>
        <end position="241"/>
    </location>
</feature>
<protein>
    <recommendedName>
        <fullName>Parkin coregulated gene protein homolog</fullName>
    </recommendedName>
    <alternativeName>
        <fullName>Hypertension-related protein 1-like protein</fullName>
    </alternativeName>
    <alternativeName>
        <fullName>PARK2 coregulated gene protein</fullName>
    </alternativeName>
</protein>
<reference key="1">
    <citation type="journal article" date="2005" name="Science">
        <title>The transcriptional landscape of the mammalian genome.</title>
        <authorList>
            <person name="Carninci P."/>
            <person name="Kasukawa T."/>
            <person name="Katayama S."/>
            <person name="Gough J."/>
            <person name="Frith M.C."/>
            <person name="Maeda N."/>
            <person name="Oyama R."/>
            <person name="Ravasi T."/>
            <person name="Lenhard B."/>
            <person name="Wells C."/>
            <person name="Kodzius R."/>
            <person name="Shimokawa K."/>
            <person name="Bajic V.B."/>
            <person name="Brenner S.E."/>
            <person name="Batalov S."/>
            <person name="Forrest A.R."/>
            <person name="Zavolan M."/>
            <person name="Davis M.J."/>
            <person name="Wilming L.G."/>
            <person name="Aidinis V."/>
            <person name="Allen J.E."/>
            <person name="Ambesi-Impiombato A."/>
            <person name="Apweiler R."/>
            <person name="Aturaliya R.N."/>
            <person name="Bailey T.L."/>
            <person name="Bansal M."/>
            <person name="Baxter L."/>
            <person name="Beisel K.W."/>
            <person name="Bersano T."/>
            <person name="Bono H."/>
            <person name="Chalk A.M."/>
            <person name="Chiu K.P."/>
            <person name="Choudhary V."/>
            <person name="Christoffels A."/>
            <person name="Clutterbuck D.R."/>
            <person name="Crowe M.L."/>
            <person name="Dalla E."/>
            <person name="Dalrymple B.P."/>
            <person name="de Bono B."/>
            <person name="Della Gatta G."/>
            <person name="di Bernardo D."/>
            <person name="Down T."/>
            <person name="Engstrom P."/>
            <person name="Fagiolini M."/>
            <person name="Faulkner G."/>
            <person name="Fletcher C.F."/>
            <person name="Fukushima T."/>
            <person name="Furuno M."/>
            <person name="Futaki S."/>
            <person name="Gariboldi M."/>
            <person name="Georgii-Hemming P."/>
            <person name="Gingeras T.R."/>
            <person name="Gojobori T."/>
            <person name="Green R.E."/>
            <person name="Gustincich S."/>
            <person name="Harbers M."/>
            <person name="Hayashi Y."/>
            <person name="Hensch T.K."/>
            <person name="Hirokawa N."/>
            <person name="Hill D."/>
            <person name="Huminiecki L."/>
            <person name="Iacono M."/>
            <person name="Ikeo K."/>
            <person name="Iwama A."/>
            <person name="Ishikawa T."/>
            <person name="Jakt M."/>
            <person name="Kanapin A."/>
            <person name="Katoh M."/>
            <person name="Kawasawa Y."/>
            <person name="Kelso J."/>
            <person name="Kitamura H."/>
            <person name="Kitano H."/>
            <person name="Kollias G."/>
            <person name="Krishnan S.P."/>
            <person name="Kruger A."/>
            <person name="Kummerfeld S.K."/>
            <person name="Kurochkin I.V."/>
            <person name="Lareau L.F."/>
            <person name="Lazarevic D."/>
            <person name="Lipovich L."/>
            <person name="Liu J."/>
            <person name="Liuni S."/>
            <person name="McWilliam S."/>
            <person name="Madan Babu M."/>
            <person name="Madera M."/>
            <person name="Marchionni L."/>
            <person name="Matsuda H."/>
            <person name="Matsuzawa S."/>
            <person name="Miki H."/>
            <person name="Mignone F."/>
            <person name="Miyake S."/>
            <person name="Morris K."/>
            <person name="Mottagui-Tabar S."/>
            <person name="Mulder N."/>
            <person name="Nakano N."/>
            <person name="Nakauchi H."/>
            <person name="Ng P."/>
            <person name="Nilsson R."/>
            <person name="Nishiguchi S."/>
            <person name="Nishikawa S."/>
            <person name="Nori F."/>
            <person name="Ohara O."/>
            <person name="Okazaki Y."/>
            <person name="Orlando V."/>
            <person name="Pang K.C."/>
            <person name="Pavan W.J."/>
            <person name="Pavesi G."/>
            <person name="Pesole G."/>
            <person name="Petrovsky N."/>
            <person name="Piazza S."/>
            <person name="Reed J."/>
            <person name="Reid J.F."/>
            <person name="Ring B.Z."/>
            <person name="Ringwald M."/>
            <person name="Rost B."/>
            <person name="Ruan Y."/>
            <person name="Salzberg S.L."/>
            <person name="Sandelin A."/>
            <person name="Schneider C."/>
            <person name="Schoenbach C."/>
            <person name="Sekiguchi K."/>
            <person name="Semple C.A."/>
            <person name="Seno S."/>
            <person name="Sessa L."/>
            <person name="Sheng Y."/>
            <person name="Shibata Y."/>
            <person name="Shimada H."/>
            <person name="Shimada K."/>
            <person name="Silva D."/>
            <person name="Sinclair B."/>
            <person name="Sperling S."/>
            <person name="Stupka E."/>
            <person name="Sugiura K."/>
            <person name="Sultana R."/>
            <person name="Takenaka Y."/>
            <person name="Taki K."/>
            <person name="Tammoja K."/>
            <person name="Tan S.L."/>
            <person name="Tang S."/>
            <person name="Taylor M.S."/>
            <person name="Tegner J."/>
            <person name="Teichmann S.A."/>
            <person name="Ueda H.R."/>
            <person name="van Nimwegen E."/>
            <person name="Verardo R."/>
            <person name="Wei C.L."/>
            <person name="Yagi K."/>
            <person name="Yamanishi H."/>
            <person name="Zabarovsky E."/>
            <person name="Zhu S."/>
            <person name="Zimmer A."/>
            <person name="Hide W."/>
            <person name="Bult C."/>
            <person name="Grimmond S.M."/>
            <person name="Teasdale R.D."/>
            <person name="Liu E.T."/>
            <person name="Brusic V."/>
            <person name="Quackenbush J."/>
            <person name="Wahlestedt C."/>
            <person name="Mattick J.S."/>
            <person name="Hume D.A."/>
            <person name="Kai C."/>
            <person name="Sasaki D."/>
            <person name="Tomaru Y."/>
            <person name="Fukuda S."/>
            <person name="Kanamori-Katayama M."/>
            <person name="Suzuki M."/>
            <person name="Aoki J."/>
            <person name="Arakawa T."/>
            <person name="Iida J."/>
            <person name="Imamura K."/>
            <person name="Itoh M."/>
            <person name="Kato T."/>
            <person name="Kawaji H."/>
            <person name="Kawagashira N."/>
            <person name="Kawashima T."/>
            <person name="Kojima M."/>
            <person name="Kondo S."/>
            <person name="Konno H."/>
            <person name="Nakano K."/>
            <person name="Ninomiya N."/>
            <person name="Nishio T."/>
            <person name="Okada M."/>
            <person name="Plessy C."/>
            <person name="Shibata K."/>
            <person name="Shiraki T."/>
            <person name="Suzuki S."/>
            <person name="Tagami M."/>
            <person name="Waki K."/>
            <person name="Watahiki A."/>
            <person name="Okamura-Oho Y."/>
            <person name="Suzuki H."/>
            <person name="Kawai J."/>
            <person name="Hayashizaki Y."/>
        </authorList>
    </citation>
    <scope>NUCLEOTIDE SEQUENCE [LARGE SCALE MRNA]</scope>
    <source>
        <strain>C57BL/6J</strain>
        <tissue>Testis</tissue>
    </source>
</reference>
<reference key="2">
    <citation type="submission" date="2003-07" db="EMBL/GenBank/DDBJ databases">
        <title>Genomic sequence analysis in the mouse T-complex region.</title>
        <authorList>
            <person name="Brathwaite M.E."/>
            <person name="Waeltz P."/>
            <person name="Qian Y."/>
            <person name="Dudekula D."/>
            <person name="Schlessinger D."/>
            <person name="Nagaraja R."/>
        </authorList>
    </citation>
    <scope>NUCLEOTIDE SEQUENCE [LARGE SCALE GENOMIC DNA] OF 37-82 AND 140-241</scope>
    <source>
        <strain>C57BL/6J</strain>
    </source>
</reference>
<reference key="3">
    <citation type="journal article" date="2009" name="Proc. Natl. Acad. Sci. U.S.A.">
        <title>MEIG1 is essential for spermiogenesis in mice.</title>
        <authorList>
            <person name="Zhang Z."/>
            <person name="Shen X."/>
            <person name="Gude D.R."/>
            <person name="Wilkinson B.M."/>
            <person name="Justice M.J."/>
            <person name="Flickinger C.J."/>
            <person name="Herr J.C."/>
            <person name="Eddy E.M."/>
            <person name="Strauss J.F. III"/>
        </authorList>
    </citation>
    <scope>INTERACTION WITH MEIG1</scope>
</reference>
<reference evidence="9" key="4">
    <citation type="journal article" date="2023" name="Cell">
        <title>Structures of sperm flagellar doublet microtubules expand the genetic spectrum of male infertility.</title>
        <authorList>
            <person name="Zhou L."/>
            <person name="Liu H."/>
            <person name="Liu S."/>
            <person name="Yang X."/>
            <person name="Dong Y."/>
            <person name="Pan Y."/>
            <person name="Xiao Z."/>
            <person name="Zheng B."/>
            <person name="Sun Y."/>
            <person name="Huang P."/>
            <person name="Zhang X."/>
            <person name="Hu J."/>
            <person name="Sun R."/>
            <person name="Feng S."/>
            <person name="Zhu Y."/>
            <person name="Liu M."/>
            <person name="Gui M."/>
            <person name="Wu J."/>
        </authorList>
    </citation>
    <scope>STRUCTURE BY ELECTRON MICROSCOPY (3.50 ANGSTROMS) OF SPERM FLAGELLAR DOUBLET MICROTUBULES</scope>
    <scope>FUNCTION</scope>
    <scope>SUBCELLULAR LOCATION</scope>
    <scope>SUBUNIT</scope>
</reference>
<reference evidence="10" key="5">
    <citation type="journal article" date="2023" name="Cell">
        <title>De novo protein identification in mammalian sperm using in situ cryoelectron tomography and AlphaFold2 docking.</title>
        <authorList>
            <person name="Chen Z."/>
            <person name="Shiozaki M."/>
            <person name="Haas K.M."/>
            <person name="Skinner W.M."/>
            <person name="Zhao S."/>
            <person name="Guo C."/>
            <person name="Polacco B.J."/>
            <person name="Yu Z."/>
            <person name="Krogan N.J."/>
            <person name="Lishko P.V."/>
            <person name="Kaake R.M."/>
            <person name="Vale R.D."/>
            <person name="Agard D.A."/>
        </authorList>
    </citation>
    <scope>STRUCTURE BY ELECTRON MICROSCOPY (7.70 ANGSTROMS) OF SPERM FLAGELLAR DOUBLET MICROTUBULES</scope>
    <scope>FUNCTION</scope>
    <scope>SUBCELLULAR LOCATION</scope>
    <scope>SUBUNIT</scope>
</reference>
<reference evidence="7 8" key="6">
    <citation type="journal article" date="2023" name="Cell Discov.">
        <title>In-cell structural insight into the stability of sperm microtubule doublet.</title>
        <authorList>
            <person name="Tai L."/>
            <person name="Yin G."/>
            <person name="Huang X."/>
            <person name="Sun F."/>
            <person name="Zhu Y."/>
        </authorList>
    </citation>
    <scope>STRUCTURE BY ELECTRON MICROSCOPY (4.50 ANGSTROMS)</scope>
    <scope>FUNCTION</scope>
    <scope>SUBUNIT</scope>
    <scope>SUBCELLULAR LOCATION</scope>
</reference>
<keyword id="KW-0002">3D-structure</keyword>
<keyword id="KW-0966">Cell projection</keyword>
<keyword id="KW-0969">Cilium</keyword>
<keyword id="KW-0963">Cytoplasm</keyword>
<keyword id="KW-0206">Cytoskeleton</keyword>
<keyword id="KW-0282">Flagellum</keyword>
<keyword id="KW-1185">Reference proteome</keyword>
<dbReference type="EMBL" id="AK005771">
    <property type="protein sequence ID" value="BAB24230.1"/>
    <property type="molecule type" value="mRNA"/>
</dbReference>
<dbReference type="EMBL" id="AC109609">
    <property type="protein sequence ID" value="AAP94052.1"/>
    <property type="molecule type" value="Genomic_DNA"/>
</dbReference>
<dbReference type="EMBL" id="AF549257">
    <property type="protein sequence ID" value="AAO16245.1"/>
    <property type="molecule type" value="Genomic_DNA"/>
</dbReference>
<dbReference type="CCDS" id="CCDS28388.1"/>
<dbReference type="RefSeq" id="NP_081308.1">
    <property type="nucleotide sequence ID" value="NM_027032.2"/>
</dbReference>
<dbReference type="PDB" id="8I7O">
    <property type="method" value="EM"/>
    <property type="resolution" value="4.50 A"/>
    <property type="chains" value="XJ/XK/XL=1-241"/>
</dbReference>
<dbReference type="PDB" id="8I7R">
    <property type="method" value="EM"/>
    <property type="resolution" value="6.50 A"/>
    <property type="chains" value="XH/XI/XJ/XK/XL/XM=1-241"/>
</dbReference>
<dbReference type="PDB" id="8IYJ">
    <property type="method" value="EM"/>
    <property type="resolution" value="3.50 A"/>
    <property type="chains" value="YA/YB/YC/YD/YE/YF/YG/YH=1-241"/>
</dbReference>
<dbReference type="PDB" id="8TO0">
    <property type="method" value="EM"/>
    <property type="resolution" value="7.70 A"/>
    <property type="chains" value="Fp/Fq/Fr/Fs/Ft=1-241"/>
</dbReference>
<dbReference type="PDBsum" id="8I7O"/>
<dbReference type="PDBsum" id="8I7R"/>
<dbReference type="PDBsum" id="8IYJ"/>
<dbReference type="PDBsum" id="8TO0"/>
<dbReference type="EMDB" id="EMD-35229"/>
<dbReference type="EMDB" id="EMD-35230"/>
<dbReference type="EMDB" id="EMD-35823"/>
<dbReference type="EMDB" id="EMD-41431"/>
<dbReference type="SMR" id="Q9DAK2"/>
<dbReference type="DIP" id="DIP-48983N"/>
<dbReference type="FunCoup" id="Q9DAK2">
    <property type="interactions" value="191"/>
</dbReference>
<dbReference type="IntAct" id="Q9DAK2">
    <property type="interactions" value="2"/>
</dbReference>
<dbReference type="MINT" id="Q9DAK2"/>
<dbReference type="STRING" id="10090.ENSMUSP00000044376"/>
<dbReference type="PhosphoSitePlus" id="Q9DAK2"/>
<dbReference type="PaxDb" id="10090-ENSMUSP00000044376"/>
<dbReference type="ProteomicsDB" id="294241"/>
<dbReference type="Antibodypedia" id="20047">
    <property type="antibodies" value="153 antibodies from 26 providers"/>
</dbReference>
<dbReference type="DNASU" id="69310"/>
<dbReference type="Ensembl" id="ENSMUST00000041463.7">
    <property type="protein sequence ID" value="ENSMUSP00000044376.7"/>
    <property type="gene ID" value="ENSMUSG00000037196.7"/>
</dbReference>
<dbReference type="GeneID" id="69310"/>
<dbReference type="KEGG" id="mmu:69310"/>
<dbReference type="UCSC" id="uc008akg.1">
    <property type="organism name" value="mouse"/>
</dbReference>
<dbReference type="AGR" id="MGI:1916560"/>
<dbReference type="CTD" id="135138"/>
<dbReference type="MGI" id="MGI:1916560">
    <property type="gene designation" value="Pacrg"/>
</dbReference>
<dbReference type="VEuPathDB" id="HostDB:ENSMUSG00000037196"/>
<dbReference type="eggNOG" id="KOG3961">
    <property type="taxonomic scope" value="Eukaryota"/>
</dbReference>
<dbReference type="GeneTree" id="ENSGT00940000157330"/>
<dbReference type="HOGENOM" id="CLU_073223_1_0_1"/>
<dbReference type="InParanoid" id="Q9DAK2"/>
<dbReference type="OMA" id="INGPIHE"/>
<dbReference type="OrthoDB" id="5954824at2759"/>
<dbReference type="PhylomeDB" id="Q9DAK2"/>
<dbReference type="TreeFam" id="TF321123"/>
<dbReference type="BioGRID-ORCS" id="69310">
    <property type="hits" value="2 hits in 76 CRISPR screens"/>
</dbReference>
<dbReference type="ChiTaRS" id="Pacrg">
    <property type="organism name" value="mouse"/>
</dbReference>
<dbReference type="PRO" id="PR:Q9DAK2"/>
<dbReference type="Proteomes" id="UP000000589">
    <property type="component" value="Chromosome 17"/>
</dbReference>
<dbReference type="RNAct" id="Q9DAK2">
    <property type="molecule type" value="protein"/>
</dbReference>
<dbReference type="Bgee" id="ENSMUSG00000037196">
    <property type="expression patterns" value="Expressed in seminiferous tubule of testis and 139 other cell types or tissues"/>
</dbReference>
<dbReference type="ExpressionAtlas" id="Q9DAK2">
    <property type="expression patterns" value="baseline and differential"/>
</dbReference>
<dbReference type="GO" id="GO:0160112">
    <property type="term" value="C:axonemal B tubule inner sheath"/>
    <property type="evidence" value="ECO:0000314"/>
    <property type="project" value="UniProtKB"/>
</dbReference>
<dbReference type="GO" id="GO:0005879">
    <property type="term" value="C:axonemal microtubule"/>
    <property type="evidence" value="ECO:0000250"/>
    <property type="project" value="UniProtKB"/>
</dbReference>
<dbReference type="GO" id="GO:0044297">
    <property type="term" value="C:cell body"/>
    <property type="evidence" value="ECO:0000314"/>
    <property type="project" value="MGI"/>
</dbReference>
<dbReference type="GO" id="GO:0005929">
    <property type="term" value="C:cilium"/>
    <property type="evidence" value="ECO:0000314"/>
    <property type="project" value="MGI"/>
</dbReference>
<dbReference type="GO" id="GO:0005829">
    <property type="term" value="C:cytosol"/>
    <property type="evidence" value="ECO:0000314"/>
    <property type="project" value="ParkinsonsUK-UCL"/>
</dbReference>
<dbReference type="GO" id="GO:0097386">
    <property type="term" value="C:glial cell projection"/>
    <property type="evidence" value="ECO:0000314"/>
    <property type="project" value="MGI"/>
</dbReference>
<dbReference type="GO" id="GO:0002177">
    <property type="term" value="C:manchette"/>
    <property type="evidence" value="ECO:0000314"/>
    <property type="project" value="MGI"/>
</dbReference>
<dbReference type="GO" id="GO:0005739">
    <property type="term" value="C:mitochondrion"/>
    <property type="evidence" value="ECO:0007005"/>
    <property type="project" value="MGI"/>
</dbReference>
<dbReference type="GO" id="GO:0043005">
    <property type="term" value="C:neuron projection"/>
    <property type="evidence" value="ECO:0000314"/>
    <property type="project" value="ParkinsonsUK-UCL"/>
</dbReference>
<dbReference type="GO" id="GO:0036126">
    <property type="term" value="C:sperm flagellum"/>
    <property type="evidence" value="ECO:0000314"/>
    <property type="project" value="UniProtKB"/>
</dbReference>
<dbReference type="GO" id="GO:0097225">
    <property type="term" value="C:sperm midpiece"/>
    <property type="evidence" value="ECO:0000314"/>
    <property type="project" value="MGI"/>
</dbReference>
<dbReference type="GO" id="GO:0031982">
    <property type="term" value="C:vesicle"/>
    <property type="evidence" value="ECO:0000314"/>
    <property type="project" value="ParkinsonsUK-UCL"/>
</dbReference>
<dbReference type="GO" id="GO:0003779">
    <property type="term" value="F:actin binding"/>
    <property type="evidence" value="ECO:0007669"/>
    <property type="project" value="Ensembl"/>
</dbReference>
<dbReference type="GO" id="GO:0043014">
    <property type="term" value="F:alpha-tubulin binding"/>
    <property type="evidence" value="ECO:0007669"/>
    <property type="project" value="Ensembl"/>
</dbReference>
<dbReference type="GO" id="GO:0048487">
    <property type="term" value="F:beta-tubulin binding"/>
    <property type="evidence" value="ECO:0007669"/>
    <property type="project" value="Ensembl"/>
</dbReference>
<dbReference type="GO" id="GO:0001664">
    <property type="term" value="F:G protein-coupled receptor binding"/>
    <property type="evidence" value="ECO:0007669"/>
    <property type="project" value="Ensembl"/>
</dbReference>
<dbReference type="GO" id="GO:0030544">
    <property type="term" value="F:Hsp70 protein binding"/>
    <property type="evidence" value="ECO:0007669"/>
    <property type="project" value="Ensembl"/>
</dbReference>
<dbReference type="GO" id="GO:0051879">
    <property type="term" value="F:Hsp90 protein binding"/>
    <property type="evidence" value="ECO:0007669"/>
    <property type="project" value="Ensembl"/>
</dbReference>
<dbReference type="GO" id="GO:0031625">
    <property type="term" value="F:ubiquitin protein ligase binding"/>
    <property type="evidence" value="ECO:0000353"/>
    <property type="project" value="ParkinsonsUK-UCL"/>
</dbReference>
<dbReference type="GO" id="GO:0034620">
    <property type="term" value="P:cellular response to unfolded protein"/>
    <property type="evidence" value="ECO:0000304"/>
    <property type="project" value="ParkinsonsUK-UCL"/>
</dbReference>
<dbReference type="GO" id="GO:0030317">
    <property type="term" value="P:flagellated sperm motility"/>
    <property type="evidence" value="ECO:0000314"/>
    <property type="project" value="UniProtKB"/>
</dbReference>
<dbReference type="GO" id="GO:0008104">
    <property type="term" value="P:protein localization"/>
    <property type="evidence" value="ECO:0000315"/>
    <property type="project" value="MGI"/>
</dbReference>
<dbReference type="GO" id="GO:0007286">
    <property type="term" value="P:spermatid development"/>
    <property type="evidence" value="ECO:0000316"/>
    <property type="project" value="MGI"/>
</dbReference>
<dbReference type="InterPro" id="IPR019399">
    <property type="entry name" value="Parkin_co-regulated_protein"/>
</dbReference>
<dbReference type="PANTHER" id="PTHR21207:SF2">
    <property type="entry name" value="PARKIN COREGULATED GENE PROTEIN"/>
    <property type="match status" value="1"/>
</dbReference>
<dbReference type="PANTHER" id="PTHR21207">
    <property type="entry name" value="PARKIN COREGULATED GENE PROTEIN PARK2 COREGULATED"/>
    <property type="match status" value="1"/>
</dbReference>
<dbReference type="Pfam" id="PF10274">
    <property type="entry name" value="ParcG"/>
    <property type="match status" value="1"/>
</dbReference>
<proteinExistence type="evidence at protein level"/>
<accession>Q9DAK2</accession>
<accession>Q7TPF9</accession>
<accession>Q8CG20</accession>
<sequence>MPKRTKLLPQQTFQVHQPRSLVSEGFTVKAMMKNSVVRGPPVAGAFKERPAKPTTFRKCYERGDFPIALEHDSKGNKIAWKVEIEKLDYHHYLPLFFDGLSEMTFPYEFFARRGIHDMLEHGGNKILPVIPQLIIPIKNALNLRNRQIICVTLKVLQHLVVSSEMVGEALLPYYRQILPILNIFKNMNVNSGDGIDYSQQKRENIGDLIQETLEAFERYGGEDAFINIKYMVPTYESCLLN</sequence>
<organism>
    <name type="scientific">Mus musculus</name>
    <name type="common">Mouse</name>
    <dbReference type="NCBI Taxonomy" id="10090"/>
    <lineage>
        <taxon>Eukaryota</taxon>
        <taxon>Metazoa</taxon>
        <taxon>Chordata</taxon>
        <taxon>Craniata</taxon>
        <taxon>Vertebrata</taxon>
        <taxon>Euteleostomi</taxon>
        <taxon>Mammalia</taxon>
        <taxon>Eutheria</taxon>
        <taxon>Euarchontoglires</taxon>
        <taxon>Glires</taxon>
        <taxon>Rodentia</taxon>
        <taxon>Myomorpha</taxon>
        <taxon>Muroidea</taxon>
        <taxon>Muridae</taxon>
        <taxon>Murinae</taxon>
        <taxon>Mus</taxon>
        <taxon>Mus</taxon>
    </lineage>
</organism>
<name>PACRG_MOUSE</name>
<comment type="function">
    <text evidence="1 2 4 5 6">Microtubule inner protein (MIP) part of the dynein-decorated doublet microtubules (DMTs) in cilia axoneme, which is required for motile cilia beating (PubMed:37295417, PubMed:37865089, PubMed:37989994). Suppresses cell death induced by accumulation of unfolded Pael receptor (Pael-R, a substrate of Parkin) (By similarity). Facilitates the formation of inclusions consisting of Pael-R, molecular chaperones, protein degradation molecules and itself when proteasome is inhibited (By similarity). May play an important role in the formation of Lewy bodies and protection of dopaminergic neurons against Parkinson disease (By similarity).</text>
</comment>
<comment type="subunit">
    <text evidence="1 3 4 5 6">Microtubule inner protein component of sperm flagellar doublet microtubules (PubMed:37295417, PubMed:37865089, PubMed:37989994). Forms a large molecular chaperone complex containing heat shock proteins 70 and 90 and chaperonin components (By similarity). Interacts with STIP1, PRKN, GPR37, HSPA8, TCP1/CCT1, CCT2, CCT3, CCT4, CCT5, CCT6A, CCT7 and CCT8 (By similarity). Interacts with MEIG1 (PubMed:19805151).</text>
</comment>
<comment type="interaction">
    <interactant intactId="EBI-8572392">
        <id>Q9DAK2</id>
    </interactant>
    <interactant intactId="EBI-15805257">
        <id>Q61845</id>
        <label>Meig1</label>
    </interactant>
    <organismsDiffer>false</organismsDiffer>
    <experiments>3</experiments>
</comment>
<comment type="subcellular location">
    <subcellularLocation>
        <location evidence="1">Cytoplasm</location>
        <location evidence="1">Cytoskeleton</location>
        <location evidence="1">Cilium axoneme</location>
    </subcellularLocation>
    <subcellularLocation>
        <location evidence="4 5 6">Cytoplasm</location>
        <location evidence="4 5 6">Cytoskeleton</location>
        <location evidence="4 5 6">Flagellum axoneme</location>
    </subcellularLocation>
</comment>
<evidence type="ECO:0000250" key="1">
    <source>
        <dbReference type="UniProtKB" id="A5PK71"/>
    </source>
</evidence>
<evidence type="ECO:0000250" key="2">
    <source>
        <dbReference type="UniProtKB" id="Q96M98"/>
    </source>
</evidence>
<evidence type="ECO:0000269" key="3">
    <source>
    </source>
</evidence>
<evidence type="ECO:0000269" key="4">
    <source>
    </source>
</evidence>
<evidence type="ECO:0000269" key="5">
    <source>
    </source>
</evidence>
<evidence type="ECO:0000269" key="6">
    <source>
    </source>
</evidence>
<evidence type="ECO:0007744" key="7">
    <source>
        <dbReference type="PDB" id="8I7O"/>
    </source>
</evidence>
<evidence type="ECO:0007744" key="8">
    <source>
        <dbReference type="PDB" id="8I7R"/>
    </source>
</evidence>
<evidence type="ECO:0007744" key="9">
    <source>
        <dbReference type="PDB" id="8IYJ"/>
    </source>
</evidence>
<evidence type="ECO:0007744" key="10">
    <source>
        <dbReference type="PDB" id="8TO0"/>
    </source>
</evidence>
<gene>
    <name type="primary">Pacrg</name>
</gene>